<reference key="1">
    <citation type="journal article" date="2006" name="Genome Biol.">
        <title>Genomic analysis reveals that Pseudomonas aeruginosa virulence is combinatorial.</title>
        <authorList>
            <person name="Lee D.G."/>
            <person name="Urbach J.M."/>
            <person name="Wu G."/>
            <person name="Liberati N.T."/>
            <person name="Feinbaum R.L."/>
            <person name="Miyata S."/>
            <person name="Diggins L.T."/>
            <person name="He J."/>
            <person name="Saucier M."/>
            <person name="Deziel E."/>
            <person name="Friedman L."/>
            <person name="Li L."/>
            <person name="Grills G."/>
            <person name="Montgomery K."/>
            <person name="Kucherlapati R."/>
            <person name="Rahme L.G."/>
            <person name="Ausubel F.M."/>
        </authorList>
    </citation>
    <scope>NUCLEOTIDE SEQUENCE [LARGE SCALE GENOMIC DNA]</scope>
    <source>
        <strain>UCBPP-PA14</strain>
    </source>
</reference>
<reference key="2">
    <citation type="journal article" date="2015" name="Mol. Cell">
        <title>Obg and membrane depolarization are part of a microbial bet-hedging strategy that leads to antibiotic tolerance.</title>
        <authorList>
            <person name="Verstraeten N."/>
            <person name="Knapen W.J."/>
            <person name="Kint C.I."/>
            <person name="Liebens V."/>
            <person name="Van den Bergh B."/>
            <person name="Dewachter L."/>
            <person name="Michiels J.E."/>
            <person name="Fu Q."/>
            <person name="David C.C."/>
            <person name="Fierro A.C."/>
            <person name="Marchal K."/>
            <person name="Beirlant J."/>
            <person name="Versees W."/>
            <person name="Hofkens J."/>
            <person name="Jansen M."/>
            <person name="Fauvart M."/>
            <person name="Michiels J."/>
        </authorList>
    </citation>
    <scope>FUNCTION IN PERSISTENCE</scope>
    <scope>MUTAGENESIS OF GLY-166</scope>
</reference>
<proteinExistence type="evidence at protein level"/>
<name>OBG_PSEAB</name>
<keyword id="KW-0963">Cytoplasm</keyword>
<keyword id="KW-0342">GTP-binding</keyword>
<keyword id="KW-0378">Hydrolase</keyword>
<keyword id="KW-0460">Magnesium</keyword>
<keyword id="KW-0479">Metal-binding</keyword>
<keyword id="KW-0547">Nucleotide-binding</keyword>
<dbReference type="EC" id="3.6.5.-" evidence="1"/>
<dbReference type="EMBL" id="CP000438">
    <property type="protein sequence ID" value="ABJ15631.1"/>
    <property type="molecule type" value="Genomic_DNA"/>
</dbReference>
<dbReference type="SMR" id="Q02GB1"/>
<dbReference type="KEGG" id="pau:PA14_60445"/>
<dbReference type="PseudoCAP" id="PA14_60445"/>
<dbReference type="HOGENOM" id="CLU_011747_2_0_6"/>
<dbReference type="BioCyc" id="PAER208963:G1G74-5110-MONOMER"/>
<dbReference type="Proteomes" id="UP000000653">
    <property type="component" value="Chromosome"/>
</dbReference>
<dbReference type="GO" id="GO:0005737">
    <property type="term" value="C:cytoplasm"/>
    <property type="evidence" value="ECO:0007669"/>
    <property type="project" value="UniProtKB-SubCell"/>
</dbReference>
<dbReference type="GO" id="GO:0005525">
    <property type="term" value="F:GTP binding"/>
    <property type="evidence" value="ECO:0007669"/>
    <property type="project" value="UniProtKB-UniRule"/>
</dbReference>
<dbReference type="GO" id="GO:0003924">
    <property type="term" value="F:GTPase activity"/>
    <property type="evidence" value="ECO:0007669"/>
    <property type="project" value="UniProtKB-UniRule"/>
</dbReference>
<dbReference type="GO" id="GO:0000287">
    <property type="term" value="F:magnesium ion binding"/>
    <property type="evidence" value="ECO:0007669"/>
    <property type="project" value="InterPro"/>
</dbReference>
<dbReference type="GO" id="GO:0042254">
    <property type="term" value="P:ribosome biogenesis"/>
    <property type="evidence" value="ECO:0007669"/>
    <property type="project" value="UniProtKB-UniRule"/>
</dbReference>
<dbReference type="CDD" id="cd01898">
    <property type="entry name" value="Obg"/>
    <property type="match status" value="1"/>
</dbReference>
<dbReference type="FunFam" id="2.70.210.12:FF:000001">
    <property type="entry name" value="GTPase Obg"/>
    <property type="match status" value="1"/>
</dbReference>
<dbReference type="FunFam" id="3.40.50.300:FF:000185">
    <property type="entry name" value="GTPase Obg"/>
    <property type="match status" value="1"/>
</dbReference>
<dbReference type="Gene3D" id="2.70.210.12">
    <property type="entry name" value="GTP1/OBG domain"/>
    <property type="match status" value="1"/>
</dbReference>
<dbReference type="Gene3D" id="3.40.50.300">
    <property type="entry name" value="P-loop containing nucleotide triphosphate hydrolases"/>
    <property type="match status" value="1"/>
</dbReference>
<dbReference type="HAMAP" id="MF_01454">
    <property type="entry name" value="GTPase_Obg"/>
    <property type="match status" value="1"/>
</dbReference>
<dbReference type="InterPro" id="IPR031167">
    <property type="entry name" value="G_OBG"/>
</dbReference>
<dbReference type="InterPro" id="IPR006073">
    <property type="entry name" value="GTP-bd"/>
</dbReference>
<dbReference type="InterPro" id="IPR014100">
    <property type="entry name" value="GTP-bd_Obg/CgtA"/>
</dbReference>
<dbReference type="InterPro" id="IPR006074">
    <property type="entry name" value="GTP1-OBG_CS"/>
</dbReference>
<dbReference type="InterPro" id="IPR006169">
    <property type="entry name" value="GTP1_OBG_dom"/>
</dbReference>
<dbReference type="InterPro" id="IPR036726">
    <property type="entry name" value="GTP1_OBG_dom_sf"/>
</dbReference>
<dbReference type="InterPro" id="IPR045086">
    <property type="entry name" value="OBG_GTPase"/>
</dbReference>
<dbReference type="InterPro" id="IPR027417">
    <property type="entry name" value="P-loop_NTPase"/>
</dbReference>
<dbReference type="NCBIfam" id="TIGR02729">
    <property type="entry name" value="Obg_CgtA"/>
    <property type="match status" value="1"/>
</dbReference>
<dbReference type="NCBIfam" id="NF008955">
    <property type="entry name" value="PRK12297.1"/>
    <property type="match status" value="1"/>
</dbReference>
<dbReference type="NCBIfam" id="NF008956">
    <property type="entry name" value="PRK12299.1"/>
    <property type="match status" value="1"/>
</dbReference>
<dbReference type="PANTHER" id="PTHR11702">
    <property type="entry name" value="DEVELOPMENTALLY REGULATED GTP-BINDING PROTEIN-RELATED"/>
    <property type="match status" value="1"/>
</dbReference>
<dbReference type="PANTHER" id="PTHR11702:SF31">
    <property type="entry name" value="MITOCHONDRIAL RIBOSOME-ASSOCIATED GTPASE 2"/>
    <property type="match status" value="1"/>
</dbReference>
<dbReference type="Pfam" id="PF01018">
    <property type="entry name" value="GTP1_OBG"/>
    <property type="match status" value="1"/>
</dbReference>
<dbReference type="Pfam" id="PF01926">
    <property type="entry name" value="MMR_HSR1"/>
    <property type="match status" value="1"/>
</dbReference>
<dbReference type="PIRSF" id="PIRSF002401">
    <property type="entry name" value="GTP_bd_Obg/CgtA"/>
    <property type="match status" value="1"/>
</dbReference>
<dbReference type="PRINTS" id="PR00326">
    <property type="entry name" value="GTP1OBG"/>
</dbReference>
<dbReference type="SUPFAM" id="SSF82051">
    <property type="entry name" value="Obg GTP-binding protein N-terminal domain"/>
    <property type="match status" value="1"/>
</dbReference>
<dbReference type="SUPFAM" id="SSF52540">
    <property type="entry name" value="P-loop containing nucleoside triphosphate hydrolases"/>
    <property type="match status" value="1"/>
</dbReference>
<dbReference type="PROSITE" id="PS51710">
    <property type="entry name" value="G_OBG"/>
    <property type="match status" value="1"/>
</dbReference>
<dbReference type="PROSITE" id="PS00905">
    <property type="entry name" value="GTP1_OBG"/>
    <property type="match status" value="1"/>
</dbReference>
<dbReference type="PROSITE" id="PS51883">
    <property type="entry name" value="OBG"/>
    <property type="match status" value="1"/>
</dbReference>
<protein>
    <recommendedName>
        <fullName evidence="1">GTPase Obg</fullName>
        <ecNumber evidence="1">3.6.5.-</ecNumber>
    </recommendedName>
    <alternativeName>
        <fullName evidence="1">GTP-binding protein Obg</fullName>
    </alternativeName>
</protein>
<evidence type="ECO:0000255" key="1">
    <source>
        <dbReference type="HAMAP-Rule" id="MF_01454"/>
    </source>
</evidence>
<evidence type="ECO:0000255" key="2">
    <source>
        <dbReference type="PROSITE-ProRule" id="PRU01231"/>
    </source>
</evidence>
<evidence type="ECO:0000256" key="3">
    <source>
        <dbReference type="SAM" id="MobiDB-lite"/>
    </source>
</evidence>
<evidence type="ECO:0000269" key="4">
    <source>
    </source>
</evidence>
<comment type="function">
    <text evidence="1 4">An essential GTPase which binds GTP, GDP and possibly (p)ppGpp with moderate affinity, with high nucleotide exchange rates and a fairly low GTP hydrolysis rate. It may play a role in control of the cell cycle, stress response, ribosome biogenesis and in those bacteria that undergo differentiation, in morphogenesis control (By similarity). Overexpression increases bacterial persistence in both stationary phase and biofilms in response to a number of antibiotics (PubMed:26051177).</text>
</comment>
<comment type="cofactor">
    <cofactor evidence="1">
        <name>Mg(2+)</name>
        <dbReference type="ChEBI" id="CHEBI:18420"/>
    </cofactor>
</comment>
<comment type="subunit">
    <text evidence="1">Monomer.</text>
</comment>
<comment type="subcellular location">
    <subcellularLocation>
        <location evidence="1">Cytoplasm</location>
    </subcellularLocation>
</comment>
<comment type="similarity">
    <text evidence="1">Belongs to the TRAFAC class OBG-HflX-like GTPase superfamily. OBG GTPase family.</text>
</comment>
<organism>
    <name type="scientific">Pseudomonas aeruginosa (strain UCBPP-PA14)</name>
    <dbReference type="NCBI Taxonomy" id="208963"/>
    <lineage>
        <taxon>Bacteria</taxon>
        <taxon>Pseudomonadati</taxon>
        <taxon>Pseudomonadota</taxon>
        <taxon>Gammaproteobacteria</taxon>
        <taxon>Pseudomonadales</taxon>
        <taxon>Pseudomonadaceae</taxon>
        <taxon>Pseudomonas</taxon>
    </lineage>
</organism>
<accession>Q02GB1</accession>
<feature type="chain" id="PRO_0000386153" description="GTPase Obg">
    <location>
        <begin position="1"/>
        <end position="406"/>
    </location>
</feature>
<feature type="domain" description="Obg" evidence="2">
    <location>
        <begin position="1"/>
        <end position="159"/>
    </location>
</feature>
<feature type="domain" description="OBG-type G" evidence="1">
    <location>
        <begin position="160"/>
        <end position="334"/>
    </location>
</feature>
<feature type="region of interest" description="Disordered" evidence="3">
    <location>
        <begin position="127"/>
        <end position="148"/>
    </location>
</feature>
<feature type="region of interest" description="Disordered" evidence="3">
    <location>
        <begin position="382"/>
        <end position="406"/>
    </location>
</feature>
<feature type="compositionally biased region" description="Polar residues" evidence="3">
    <location>
        <begin position="129"/>
        <end position="143"/>
    </location>
</feature>
<feature type="compositionally biased region" description="Acidic residues" evidence="3">
    <location>
        <begin position="385"/>
        <end position="399"/>
    </location>
</feature>
<feature type="binding site" evidence="1">
    <location>
        <begin position="166"/>
        <end position="173"/>
    </location>
    <ligand>
        <name>GTP</name>
        <dbReference type="ChEBI" id="CHEBI:37565"/>
    </ligand>
</feature>
<feature type="binding site" evidence="1">
    <location>
        <position position="173"/>
    </location>
    <ligand>
        <name>Mg(2+)</name>
        <dbReference type="ChEBI" id="CHEBI:18420"/>
    </ligand>
</feature>
<feature type="binding site" evidence="1">
    <location>
        <begin position="191"/>
        <end position="195"/>
    </location>
    <ligand>
        <name>GTP</name>
        <dbReference type="ChEBI" id="CHEBI:37565"/>
    </ligand>
</feature>
<feature type="binding site" evidence="1">
    <location>
        <position position="193"/>
    </location>
    <ligand>
        <name>Mg(2+)</name>
        <dbReference type="ChEBI" id="CHEBI:18420"/>
    </ligand>
</feature>
<feature type="binding site" evidence="1">
    <location>
        <begin position="213"/>
        <end position="216"/>
    </location>
    <ligand>
        <name>GTP</name>
        <dbReference type="ChEBI" id="CHEBI:37565"/>
    </ligand>
</feature>
<feature type="binding site" evidence="1">
    <location>
        <begin position="283"/>
        <end position="286"/>
    </location>
    <ligand>
        <name>GTP</name>
        <dbReference type="ChEBI" id="CHEBI:37565"/>
    </ligand>
</feature>
<feature type="binding site" evidence="1">
    <location>
        <begin position="315"/>
        <end position="317"/>
    </location>
    <ligand>
        <name>GTP</name>
        <dbReference type="ChEBI" id="CHEBI:37565"/>
    </ligand>
</feature>
<feature type="mutagenesis site" description="No increase in persister cells upon overexpression." evidence="4">
    <original>G</original>
    <variation>V</variation>
    <location>
        <position position="166"/>
    </location>
</feature>
<sequence>MKFVDEVSIHVKAGDGGNGLMSFRREKFIEKGGPNGGDGGDGGSIYLEADVNLNTLVDYRYTRRFDAQRGENGGSKDCTGAKGDDLILPVPVGTTVIDANTQEIIGDLTEPGQRLMVAQGGWHGLGNTRFKSSTNRAPRQTTPGKPGEARDLKLELKVLADVGLLGLPNAGKSTFIRAVSAAKPKVADYPFTTLVPNLGVVSVGRYKSFVVADIPGLIEGAAEGAGLGIRFLKHLARTRILLHLVDMAPLDESDPADAAEVIVRELGRFSPALTERERWLVLNKMDQILDPAEREARKQAVIERLGWEGPVYVISALERDGTEALSQDIMRYLDERTLRLEEDPQYAEELAELDRRIEDEARARLQALDDARALRRSGLKNAGAVDDDDFDDEEDDGDGPEIFYVP</sequence>
<gene>
    <name evidence="1" type="primary">obg</name>
    <name type="ordered locus">PA14_60445</name>
</gene>